<proteinExistence type="inferred from homology"/>
<dbReference type="EC" id="3.1.1.-"/>
<dbReference type="EMBL" id="D84432">
    <property type="protein sequence ID" value="BAA12552.1"/>
    <property type="molecule type" value="Genomic_DNA"/>
</dbReference>
<dbReference type="EMBL" id="AL009126">
    <property type="protein sequence ID" value="CAB14382.1"/>
    <property type="molecule type" value="Genomic_DNA"/>
</dbReference>
<dbReference type="PIR" id="F69959">
    <property type="entry name" value="F69959"/>
</dbReference>
<dbReference type="RefSeq" id="NP_390331.1">
    <property type="nucleotide sequence ID" value="NC_000964.3"/>
</dbReference>
<dbReference type="RefSeq" id="WP_003230220.1">
    <property type="nucleotide sequence ID" value="NZ_OZ025638.1"/>
</dbReference>
<dbReference type="SMR" id="P54513"/>
<dbReference type="FunCoup" id="P54513">
    <property type="interactions" value="9"/>
</dbReference>
<dbReference type="STRING" id="224308.BSU24510"/>
<dbReference type="PaxDb" id="224308-BSU24510"/>
<dbReference type="EnsemblBacteria" id="CAB14382">
    <property type="protein sequence ID" value="CAB14382"/>
    <property type="gene ID" value="BSU_24510"/>
</dbReference>
<dbReference type="GeneID" id="938553"/>
<dbReference type="KEGG" id="bsu:BSU24510"/>
<dbReference type="PATRIC" id="fig|224308.179.peg.2669"/>
<dbReference type="eggNOG" id="COG1752">
    <property type="taxonomic scope" value="Bacteria"/>
</dbReference>
<dbReference type="InParanoid" id="P54513"/>
<dbReference type="OrthoDB" id="9770965at2"/>
<dbReference type="PhylomeDB" id="P54513"/>
<dbReference type="BioCyc" id="BSUB:BSU24510-MONOMER"/>
<dbReference type="Proteomes" id="UP000001570">
    <property type="component" value="Chromosome"/>
</dbReference>
<dbReference type="GO" id="GO:0005886">
    <property type="term" value="C:plasma membrane"/>
    <property type="evidence" value="ECO:0007669"/>
    <property type="project" value="UniProtKB-SubCell"/>
</dbReference>
<dbReference type="GO" id="GO:0016787">
    <property type="term" value="F:hydrolase activity"/>
    <property type="evidence" value="ECO:0007669"/>
    <property type="project" value="UniProtKB-KW"/>
</dbReference>
<dbReference type="GO" id="GO:0016042">
    <property type="term" value="P:lipid catabolic process"/>
    <property type="evidence" value="ECO:0007669"/>
    <property type="project" value="UniProtKB-KW"/>
</dbReference>
<dbReference type="CDD" id="cd07207">
    <property type="entry name" value="Pat_ExoU_VipD_like"/>
    <property type="match status" value="1"/>
</dbReference>
<dbReference type="Gene3D" id="3.40.1090.10">
    <property type="entry name" value="Cytosolic phospholipase A2 catalytic domain"/>
    <property type="match status" value="2"/>
</dbReference>
<dbReference type="InterPro" id="IPR016035">
    <property type="entry name" value="Acyl_Trfase/lysoPLipase"/>
</dbReference>
<dbReference type="InterPro" id="IPR052580">
    <property type="entry name" value="Lipid_Hydrolase"/>
</dbReference>
<dbReference type="InterPro" id="IPR002641">
    <property type="entry name" value="PNPLA_dom"/>
</dbReference>
<dbReference type="PANTHER" id="PTHR46394">
    <property type="entry name" value="ANNEXIN"/>
    <property type="match status" value="1"/>
</dbReference>
<dbReference type="PANTHER" id="PTHR46394:SF1">
    <property type="entry name" value="PNPLA DOMAIN-CONTAINING PROTEIN"/>
    <property type="match status" value="1"/>
</dbReference>
<dbReference type="Pfam" id="PF01734">
    <property type="entry name" value="Patatin"/>
    <property type="match status" value="1"/>
</dbReference>
<dbReference type="SUPFAM" id="SSF52151">
    <property type="entry name" value="FabD/lysophospholipase-like"/>
    <property type="match status" value="1"/>
</dbReference>
<dbReference type="PROSITE" id="PS51635">
    <property type="entry name" value="PNPLA"/>
    <property type="match status" value="1"/>
</dbReference>
<organism>
    <name type="scientific">Bacillus subtilis (strain 168)</name>
    <dbReference type="NCBI Taxonomy" id="224308"/>
    <lineage>
        <taxon>Bacteria</taxon>
        <taxon>Bacillati</taxon>
        <taxon>Bacillota</taxon>
        <taxon>Bacilli</taxon>
        <taxon>Bacillales</taxon>
        <taxon>Bacillaceae</taxon>
        <taxon>Bacillus</taxon>
    </lineage>
</organism>
<evidence type="ECO:0000250" key="1"/>
<evidence type="ECO:0000255" key="2"/>
<evidence type="ECO:0000255" key="3">
    <source>
        <dbReference type="PROSITE-ProRule" id="PRU01161"/>
    </source>
</evidence>
<evidence type="ECO:0000305" key="4"/>
<comment type="function">
    <text evidence="1">Probable lipid hydrolase.</text>
</comment>
<comment type="subcellular location">
    <subcellularLocation>
        <location evidence="4">Cell membrane</location>
        <topology evidence="4">Single-pass membrane protein</topology>
    </subcellularLocation>
</comment>
<protein>
    <recommendedName>
        <fullName>Uncharacterized protein YqhO</fullName>
        <ecNumber>3.1.1.-</ecNumber>
    </recommendedName>
</protein>
<name>YQHO_BACSU</name>
<accession>P54513</accession>
<gene>
    <name type="primary">yqhO</name>
    <name type="ordered locus">BSU24510</name>
</gene>
<reference key="1">
    <citation type="journal article" date="1996" name="Microbiology">
        <title>Systematic sequencing of the 283 kb 210 degrees-232 degrees region of the Bacillus subtilis genome containing the skin element and many sporulation genes.</title>
        <authorList>
            <person name="Mizuno M."/>
            <person name="Masuda S."/>
            <person name="Takemaru K."/>
            <person name="Hosono S."/>
            <person name="Sato T."/>
            <person name="Takeuchi M."/>
            <person name="Kobayashi Y."/>
        </authorList>
    </citation>
    <scope>NUCLEOTIDE SEQUENCE [GENOMIC DNA]</scope>
    <source>
        <strain>168 / JH642</strain>
    </source>
</reference>
<reference key="2">
    <citation type="journal article" date="1997" name="Nature">
        <title>The complete genome sequence of the Gram-positive bacterium Bacillus subtilis.</title>
        <authorList>
            <person name="Kunst F."/>
            <person name="Ogasawara N."/>
            <person name="Moszer I."/>
            <person name="Albertini A.M."/>
            <person name="Alloni G."/>
            <person name="Azevedo V."/>
            <person name="Bertero M.G."/>
            <person name="Bessieres P."/>
            <person name="Bolotin A."/>
            <person name="Borchert S."/>
            <person name="Borriss R."/>
            <person name="Boursier L."/>
            <person name="Brans A."/>
            <person name="Braun M."/>
            <person name="Brignell S.C."/>
            <person name="Bron S."/>
            <person name="Brouillet S."/>
            <person name="Bruschi C.V."/>
            <person name="Caldwell B."/>
            <person name="Capuano V."/>
            <person name="Carter N.M."/>
            <person name="Choi S.-K."/>
            <person name="Codani J.-J."/>
            <person name="Connerton I.F."/>
            <person name="Cummings N.J."/>
            <person name="Daniel R.A."/>
            <person name="Denizot F."/>
            <person name="Devine K.M."/>
            <person name="Duesterhoeft A."/>
            <person name="Ehrlich S.D."/>
            <person name="Emmerson P.T."/>
            <person name="Entian K.-D."/>
            <person name="Errington J."/>
            <person name="Fabret C."/>
            <person name="Ferrari E."/>
            <person name="Foulger D."/>
            <person name="Fritz C."/>
            <person name="Fujita M."/>
            <person name="Fujita Y."/>
            <person name="Fuma S."/>
            <person name="Galizzi A."/>
            <person name="Galleron N."/>
            <person name="Ghim S.-Y."/>
            <person name="Glaser P."/>
            <person name="Goffeau A."/>
            <person name="Golightly E.J."/>
            <person name="Grandi G."/>
            <person name="Guiseppi G."/>
            <person name="Guy B.J."/>
            <person name="Haga K."/>
            <person name="Haiech J."/>
            <person name="Harwood C.R."/>
            <person name="Henaut A."/>
            <person name="Hilbert H."/>
            <person name="Holsappel S."/>
            <person name="Hosono S."/>
            <person name="Hullo M.-F."/>
            <person name="Itaya M."/>
            <person name="Jones L.-M."/>
            <person name="Joris B."/>
            <person name="Karamata D."/>
            <person name="Kasahara Y."/>
            <person name="Klaerr-Blanchard M."/>
            <person name="Klein C."/>
            <person name="Kobayashi Y."/>
            <person name="Koetter P."/>
            <person name="Koningstein G."/>
            <person name="Krogh S."/>
            <person name="Kumano M."/>
            <person name="Kurita K."/>
            <person name="Lapidus A."/>
            <person name="Lardinois S."/>
            <person name="Lauber J."/>
            <person name="Lazarevic V."/>
            <person name="Lee S.-M."/>
            <person name="Levine A."/>
            <person name="Liu H."/>
            <person name="Masuda S."/>
            <person name="Mauel C."/>
            <person name="Medigue C."/>
            <person name="Medina N."/>
            <person name="Mellado R.P."/>
            <person name="Mizuno M."/>
            <person name="Moestl D."/>
            <person name="Nakai S."/>
            <person name="Noback M."/>
            <person name="Noone D."/>
            <person name="O'Reilly M."/>
            <person name="Ogawa K."/>
            <person name="Ogiwara A."/>
            <person name="Oudega B."/>
            <person name="Park S.-H."/>
            <person name="Parro V."/>
            <person name="Pohl T.M."/>
            <person name="Portetelle D."/>
            <person name="Porwollik S."/>
            <person name="Prescott A.M."/>
            <person name="Presecan E."/>
            <person name="Pujic P."/>
            <person name="Purnelle B."/>
            <person name="Rapoport G."/>
            <person name="Rey M."/>
            <person name="Reynolds S."/>
            <person name="Rieger M."/>
            <person name="Rivolta C."/>
            <person name="Rocha E."/>
            <person name="Roche B."/>
            <person name="Rose M."/>
            <person name="Sadaie Y."/>
            <person name="Sato T."/>
            <person name="Scanlan E."/>
            <person name="Schleich S."/>
            <person name="Schroeter R."/>
            <person name="Scoffone F."/>
            <person name="Sekiguchi J."/>
            <person name="Sekowska A."/>
            <person name="Seror S.J."/>
            <person name="Serror P."/>
            <person name="Shin B.-S."/>
            <person name="Soldo B."/>
            <person name="Sorokin A."/>
            <person name="Tacconi E."/>
            <person name="Takagi T."/>
            <person name="Takahashi H."/>
            <person name="Takemaru K."/>
            <person name="Takeuchi M."/>
            <person name="Tamakoshi A."/>
            <person name="Tanaka T."/>
            <person name="Terpstra P."/>
            <person name="Tognoni A."/>
            <person name="Tosato V."/>
            <person name="Uchiyama S."/>
            <person name="Vandenbol M."/>
            <person name="Vannier F."/>
            <person name="Vassarotti A."/>
            <person name="Viari A."/>
            <person name="Wambutt R."/>
            <person name="Wedler E."/>
            <person name="Wedler H."/>
            <person name="Weitzenegger T."/>
            <person name="Winters P."/>
            <person name="Wipat A."/>
            <person name="Yamamoto H."/>
            <person name="Yamane K."/>
            <person name="Yasumoto K."/>
            <person name="Yata K."/>
            <person name="Yoshida K."/>
            <person name="Yoshikawa H.-F."/>
            <person name="Zumstein E."/>
            <person name="Yoshikawa H."/>
            <person name="Danchin A."/>
        </authorList>
    </citation>
    <scope>NUCLEOTIDE SEQUENCE [LARGE SCALE GENOMIC DNA]</scope>
    <source>
        <strain>168</strain>
    </source>
</reference>
<sequence length="291" mass="32860">MYIDGVFSGGGVKGIALAGAYEVLEEKGFRFKRVAGTSAGAIIAAFIASGYTSKEIHALIEEVDGEKLLDQRYSFLPLKMLQWVSIYWRLGLYKGDTIEKWIADLLRAKGIRVFGDLQKGSLRLIASDLTNGTMIVLPDDLARYGLNPDMFPVARAVRMSCSIPYFFEPIKLKTDTGTATVVDGGVLSNFPIWLFSKERKRPVIGVTLAPRERERPKKNIRNAFELFGALFETMKDAHDARHIASRYEQNIIFLPVDDVMATDFHLTQQKKLALIELGKRRTELFLKQWTY</sequence>
<keyword id="KW-1003">Cell membrane</keyword>
<keyword id="KW-0378">Hydrolase</keyword>
<keyword id="KW-0442">Lipid degradation</keyword>
<keyword id="KW-0443">Lipid metabolism</keyword>
<keyword id="KW-0472">Membrane</keyword>
<keyword id="KW-1185">Reference proteome</keyword>
<keyword id="KW-0812">Transmembrane</keyword>
<keyword id="KW-1133">Transmembrane helix</keyword>
<feature type="chain" id="PRO_0000049821" description="Uncharacterized protein YqhO">
    <location>
        <begin position="1"/>
        <end position="291"/>
    </location>
</feature>
<feature type="transmembrane region" description="Helical" evidence="2">
    <location>
        <begin position="34"/>
        <end position="50"/>
    </location>
</feature>
<feature type="domain" description="PNPLA" evidence="3">
    <location>
        <begin position="5"/>
        <end position="196"/>
    </location>
</feature>
<feature type="short sequence motif" description="GXGXXG" evidence="3">
    <location>
        <begin position="9"/>
        <end position="14"/>
    </location>
</feature>
<feature type="short sequence motif" description="GXSXG" evidence="3">
    <location>
        <begin position="36"/>
        <end position="40"/>
    </location>
</feature>
<feature type="short sequence motif" description="DGA/G" evidence="3">
    <location>
        <begin position="183"/>
        <end position="185"/>
    </location>
</feature>
<feature type="active site" description="Nucleophile" evidence="3">
    <location>
        <position position="38"/>
    </location>
</feature>
<feature type="active site" description="Proton acceptor" evidence="3">
    <location>
        <position position="183"/>
    </location>
</feature>